<feature type="chain" id="PRO_1000134602" description="TDP-N-acetylfucosamine:lipid II N-acetylfucosaminyltransferase">
    <location>
        <begin position="1"/>
        <end position="359"/>
    </location>
</feature>
<reference key="1">
    <citation type="journal article" date="2009" name="PLoS Genet.">
        <title>Organised genome dynamics in the Escherichia coli species results in highly diverse adaptive paths.</title>
        <authorList>
            <person name="Touchon M."/>
            <person name="Hoede C."/>
            <person name="Tenaillon O."/>
            <person name="Barbe V."/>
            <person name="Baeriswyl S."/>
            <person name="Bidet P."/>
            <person name="Bingen E."/>
            <person name="Bonacorsi S."/>
            <person name="Bouchier C."/>
            <person name="Bouvet O."/>
            <person name="Calteau A."/>
            <person name="Chiapello H."/>
            <person name="Clermont O."/>
            <person name="Cruveiller S."/>
            <person name="Danchin A."/>
            <person name="Diard M."/>
            <person name="Dossat C."/>
            <person name="Karoui M.E."/>
            <person name="Frapy E."/>
            <person name="Garry L."/>
            <person name="Ghigo J.M."/>
            <person name="Gilles A.M."/>
            <person name="Johnson J."/>
            <person name="Le Bouguenec C."/>
            <person name="Lescat M."/>
            <person name="Mangenot S."/>
            <person name="Martinez-Jehanne V."/>
            <person name="Matic I."/>
            <person name="Nassif X."/>
            <person name="Oztas S."/>
            <person name="Petit M.A."/>
            <person name="Pichon C."/>
            <person name="Rouy Z."/>
            <person name="Ruf C.S."/>
            <person name="Schneider D."/>
            <person name="Tourret J."/>
            <person name="Vacherie B."/>
            <person name="Vallenet D."/>
            <person name="Medigue C."/>
            <person name="Rocha E.P.C."/>
            <person name="Denamur E."/>
        </authorList>
    </citation>
    <scope>NUCLEOTIDE SEQUENCE [LARGE SCALE GENOMIC DNA]</scope>
    <source>
        <strain>ATCC 35469 / DSM 13698 / BCRC 15582 / CCUG 18766 / IAM 14443 / JCM 21226 / LMG 7866 / NBRC 102419 / NCTC 12128 / CDC 0568-73</strain>
    </source>
</reference>
<sequence>MTVLIHVLGSDIPHHNQTVLRFFNDVLAATSENAREFMVVGKDDGLIDSCPALSVQFFPGKKSLAEAVIAKAKANRQQRFFFHGQFNPKLWLALLSGGIKPSQFYWHIWGADLYELSSGLRYKLFYPLRRLAQKRVGCVFATRGDLSFFAKTHPKVRGELLYFPTRMDPSLNTMANDRQREGKMTILVGNSGDRSNEHVAALRAVHQQFGDTVKVVVPMGYPPNNEAYIEEVRQAGLALFSEENLQVLSEKLEFDAYLTLLRQCDLGYFIFARQQGIGTLCLLIQAGIPCVLNRENPFWQDMTEQHLPVLFTTDDLNEDIVREAQRQLASVDKNTIAFFSPNYLQGWQRALAIAAGEVA</sequence>
<evidence type="ECO:0000255" key="1">
    <source>
        <dbReference type="HAMAP-Rule" id="MF_01002"/>
    </source>
</evidence>
<proteinExistence type="inferred from homology"/>
<organism>
    <name type="scientific">Escherichia fergusonii (strain ATCC 35469 / DSM 13698 / CCUG 18766 / IAM 14443 / JCM 21226 / LMG 7866 / NBRC 102419 / NCTC 12128 / CDC 0568-73)</name>
    <dbReference type="NCBI Taxonomy" id="585054"/>
    <lineage>
        <taxon>Bacteria</taxon>
        <taxon>Pseudomonadati</taxon>
        <taxon>Pseudomonadota</taxon>
        <taxon>Gammaproteobacteria</taxon>
        <taxon>Enterobacterales</taxon>
        <taxon>Enterobacteriaceae</taxon>
        <taxon>Escherichia</taxon>
    </lineage>
</organism>
<gene>
    <name evidence="1" type="primary">wecF</name>
    <name evidence="1" type="synonym">rffT</name>
    <name type="ordered locus">EFER_3711</name>
</gene>
<name>WECF_ESCF3</name>
<protein>
    <recommendedName>
        <fullName evidence="1">TDP-N-acetylfucosamine:lipid II N-acetylfucosaminyltransferase</fullName>
        <ecNumber evidence="1">2.4.1.325</ecNumber>
    </recommendedName>
    <alternativeName>
        <fullName evidence="1">4-alpha-L-fucosyltransferase</fullName>
    </alternativeName>
    <alternativeName>
        <fullName evidence="1">TDP-Fuc4NAc:lipid II Fuc4NAc transferase</fullName>
        <shortName evidence="1">Fuc4NAc transferase</shortName>
    </alternativeName>
</protein>
<accession>B7LU63</accession>
<comment type="function">
    <text evidence="1">Catalyzes the synthesis of Und-PP-GlcNAc-ManNAcA-Fuc4NAc (Lipid III), the third lipid-linked intermediate involved in ECA synthesis.</text>
</comment>
<comment type="catalytic activity">
    <reaction evidence="1">
        <text>beta-D-ManNAcA-(1-&gt;4)-alpha-D-GlcNAc-di-trans,octa-cis-undecaprenyl diphosphate + dTDP-4-acetamido-4,6-dideoxy-alpha-D-galactose = alpha-D-FucNAc4-(1-&gt;4)-beta-D-ManNAcA-(1-&gt;4)-D-GlcNAc-undecaprenyl diphosphate + dTDP + H(+)</text>
        <dbReference type="Rhea" id="RHEA:28759"/>
        <dbReference type="ChEBI" id="CHEBI:15378"/>
        <dbReference type="ChEBI" id="CHEBI:58369"/>
        <dbReference type="ChEBI" id="CHEBI:61495"/>
        <dbReference type="ChEBI" id="CHEBI:61496"/>
        <dbReference type="ChEBI" id="CHEBI:68493"/>
        <dbReference type="EC" id="2.4.1.325"/>
    </reaction>
</comment>
<comment type="pathway">
    <text evidence="1">Bacterial outer membrane biogenesis; enterobacterial common antigen biosynthesis.</text>
</comment>
<comment type="subcellular location">
    <subcellularLocation>
        <location evidence="1">Cell inner membrane</location>
        <topology evidence="1">Peripheral membrane protein</topology>
    </subcellularLocation>
</comment>
<comment type="similarity">
    <text evidence="1">Belongs to the glycosyltransferase 56 family.</text>
</comment>
<keyword id="KW-0997">Cell inner membrane</keyword>
<keyword id="KW-1003">Cell membrane</keyword>
<keyword id="KW-0328">Glycosyltransferase</keyword>
<keyword id="KW-0472">Membrane</keyword>
<keyword id="KW-0808">Transferase</keyword>
<dbReference type="EC" id="2.4.1.325" evidence="1"/>
<dbReference type="EMBL" id="CU928158">
    <property type="protein sequence ID" value="CAQ91171.1"/>
    <property type="molecule type" value="Genomic_DNA"/>
</dbReference>
<dbReference type="RefSeq" id="WP_000217211.1">
    <property type="nucleotide sequence ID" value="NC_011740.1"/>
</dbReference>
<dbReference type="SMR" id="B7LU63"/>
<dbReference type="CAZy" id="GT56">
    <property type="family name" value="Glycosyltransferase Family 56"/>
</dbReference>
<dbReference type="GeneID" id="75059685"/>
<dbReference type="KEGG" id="efe:EFER_3711"/>
<dbReference type="HOGENOM" id="CLU_066584_0_0_6"/>
<dbReference type="OrthoDB" id="6532169at2"/>
<dbReference type="UniPathway" id="UPA00566"/>
<dbReference type="Proteomes" id="UP000000745">
    <property type="component" value="Chromosome"/>
</dbReference>
<dbReference type="GO" id="GO:0005886">
    <property type="term" value="C:plasma membrane"/>
    <property type="evidence" value="ECO:0007669"/>
    <property type="project" value="UniProtKB-SubCell"/>
</dbReference>
<dbReference type="GO" id="GO:0102031">
    <property type="term" value="F:4-acetamido-4,6-dideoxy-D-galactose transferase activity"/>
    <property type="evidence" value="ECO:0007669"/>
    <property type="project" value="UniProtKB-EC"/>
</dbReference>
<dbReference type="GO" id="GO:0008417">
    <property type="term" value="F:fucosyltransferase activity"/>
    <property type="evidence" value="ECO:0007669"/>
    <property type="project" value="InterPro"/>
</dbReference>
<dbReference type="GO" id="GO:0009246">
    <property type="term" value="P:enterobacterial common antigen biosynthetic process"/>
    <property type="evidence" value="ECO:0007669"/>
    <property type="project" value="UniProtKB-UniRule"/>
</dbReference>
<dbReference type="GO" id="GO:0036065">
    <property type="term" value="P:fucosylation"/>
    <property type="evidence" value="ECO:0007669"/>
    <property type="project" value="InterPro"/>
</dbReference>
<dbReference type="HAMAP" id="MF_01002">
    <property type="entry name" value="WecF_RffT"/>
    <property type="match status" value="1"/>
</dbReference>
<dbReference type="InterPro" id="IPR009993">
    <property type="entry name" value="WecF"/>
</dbReference>
<dbReference type="NCBIfam" id="NF002752">
    <property type="entry name" value="PRK02797.1-1"/>
    <property type="match status" value="1"/>
</dbReference>
<dbReference type="NCBIfam" id="NF002753">
    <property type="entry name" value="PRK02797.1-2"/>
    <property type="match status" value="1"/>
</dbReference>
<dbReference type="NCBIfam" id="NF002754">
    <property type="entry name" value="PRK02797.1-3"/>
    <property type="match status" value="1"/>
</dbReference>
<dbReference type="Pfam" id="PF07429">
    <property type="entry name" value="Glyco_transf_56"/>
    <property type="match status" value="1"/>
</dbReference>